<protein>
    <recommendedName>
        <fullName>Probable ATP-dependent RNA helicase YfmL</fullName>
        <ecNumber>3.6.4.13</ecNumber>
    </recommendedName>
</protein>
<organism>
    <name type="scientific">Bacillus subtilis (strain 168)</name>
    <dbReference type="NCBI Taxonomy" id="224308"/>
    <lineage>
        <taxon>Bacteria</taxon>
        <taxon>Bacillati</taxon>
        <taxon>Bacillota</taxon>
        <taxon>Bacilli</taxon>
        <taxon>Bacillales</taxon>
        <taxon>Bacillaceae</taxon>
        <taxon>Bacillus</taxon>
    </lineage>
</organism>
<gene>
    <name type="primary">yfmL</name>
    <name type="ordered locus">BSU07430</name>
</gene>
<sequence>MTQTWPFLHNAQSFIQENWNASGFQKPTPVQEQAAQLIMDGKDVIAESPTGTGKTLAYALPVLERIKPEQKHPQAVILAPSRELVMQIFQVIQDWKAGSELRAASLIGGANVKKQVEKLKKHPHIIVGTPGRVFELIKAKKLKMHEVKTIVLDETDQLVLPEHRETMKQIIKTTLRDRQLLCFSATLKKETEDVLRELAQEPEVLKVQRSKAEAGKVKHQYLICDQRDKVKLLQKLSRLEGMQALVFVRDIGNLSVYAEKLAYHHVELGVLHSEAKKMERAKIIATFEDGEFPLLLATDIAARGLDIENLPYVIHADIPDEDGYVHRSGRTGRAGKEGNVLSLVTKLEESKLKKMAKKLGVELSEAVYAGGKLKTK</sequence>
<evidence type="ECO:0000255" key="1">
    <source>
        <dbReference type="PROSITE-ProRule" id="PRU00541"/>
    </source>
</evidence>
<evidence type="ECO:0000255" key="2">
    <source>
        <dbReference type="PROSITE-ProRule" id="PRU00542"/>
    </source>
</evidence>
<evidence type="ECO:0000269" key="3">
    <source>
    </source>
</evidence>
<evidence type="ECO:0000305" key="4"/>
<dbReference type="EC" id="3.6.4.13"/>
<dbReference type="EMBL" id="D86417">
    <property type="protein sequence ID" value="BAA22326.1"/>
    <property type="molecule type" value="Genomic_DNA"/>
</dbReference>
<dbReference type="EMBL" id="AL009126">
    <property type="protein sequence ID" value="CAB12572.1"/>
    <property type="molecule type" value="Genomic_DNA"/>
</dbReference>
<dbReference type="PIR" id="C69813">
    <property type="entry name" value="C69813"/>
</dbReference>
<dbReference type="RefSeq" id="NP_388624.1">
    <property type="nucleotide sequence ID" value="NC_000964.3"/>
</dbReference>
<dbReference type="RefSeq" id="WP_003233750.1">
    <property type="nucleotide sequence ID" value="NZ_OZ025638.1"/>
</dbReference>
<dbReference type="SMR" id="O34750"/>
<dbReference type="FunCoup" id="O34750">
    <property type="interactions" value="37"/>
</dbReference>
<dbReference type="STRING" id="224308.BSU07430"/>
<dbReference type="PaxDb" id="224308-BSU07430"/>
<dbReference type="EnsemblBacteria" id="CAB12572">
    <property type="protein sequence ID" value="CAB12572"/>
    <property type="gene ID" value="BSU_07430"/>
</dbReference>
<dbReference type="GeneID" id="938792"/>
<dbReference type="KEGG" id="bsu:BSU07430"/>
<dbReference type="PATRIC" id="fig|224308.179.peg.806"/>
<dbReference type="eggNOG" id="COG0513">
    <property type="taxonomic scope" value="Bacteria"/>
</dbReference>
<dbReference type="InParanoid" id="O34750"/>
<dbReference type="OrthoDB" id="9805696at2"/>
<dbReference type="PhylomeDB" id="O34750"/>
<dbReference type="BioCyc" id="BSUB:BSU07430-MONOMER"/>
<dbReference type="Proteomes" id="UP000001570">
    <property type="component" value="Chromosome"/>
</dbReference>
<dbReference type="GO" id="GO:0005829">
    <property type="term" value="C:cytosol"/>
    <property type="evidence" value="ECO:0000318"/>
    <property type="project" value="GO_Central"/>
</dbReference>
<dbReference type="GO" id="GO:0005524">
    <property type="term" value="F:ATP binding"/>
    <property type="evidence" value="ECO:0007669"/>
    <property type="project" value="UniProtKB-KW"/>
</dbReference>
<dbReference type="GO" id="GO:0016887">
    <property type="term" value="F:ATP hydrolysis activity"/>
    <property type="evidence" value="ECO:0007669"/>
    <property type="project" value="RHEA"/>
</dbReference>
<dbReference type="GO" id="GO:0003724">
    <property type="term" value="F:RNA helicase activity"/>
    <property type="evidence" value="ECO:0000318"/>
    <property type="project" value="GO_Central"/>
</dbReference>
<dbReference type="GO" id="GO:0033592">
    <property type="term" value="F:RNA strand annealing activity"/>
    <property type="evidence" value="ECO:0000318"/>
    <property type="project" value="GO_Central"/>
</dbReference>
<dbReference type="GO" id="GO:0009409">
    <property type="term" value="P:response to cold"/>
    <property type="evidence" value="ECO:0000318"/>
    <property type="project" value="GO_Central"/>
</dbReference>
<dbReference type="GO" id="GO:0042254">
    <property type="term" value="P:ribosome biogenesis"/>
    <property type="evidence" value="ECO:0007669"/>
    <property type="project" value="UniProtKB-KW"/>
</dbReference>
<dbReference type="CDD" id="cd00268">
    <property type="entry name" value="DEADc"/>
    <property type="match status" value="1"/>
</dbReference>
<dbReference type="CDD" id="cd18787">
    <property type="entry name" value="SF2_C_DEAD"/>
    <property type="match status" value="1"/>
</dbReference>
<dbReference type="Gene3D" id="3.40.50.300">
    <property type="entry name" value="P-loop containing nucleotide triphosphate hydrolases"/>
    <property type="match status" value="2"/>
</dbReference>
<dbReference type="InterPro" id="IPR011545">
    <property type="entry name" value="DEAD/DEAH_box_helicase_dom"/>
</dbReference>
<dbReference type="InterPro" id="IPR050547">
    <property type="entry name" value="DEAD_box_RNA_helicases"/>
</dbReference>
<dbReference type="InterPro" id="IPR014001">
    <property type="entry name" value="Helicase_ATP-bd"/>
</dbReference>
<dbReference type="InterPro" id="IPR001650">
    <property type="entry name" value="Helicase_C-like"/>
</dbReference>
<dbReference type="InterPro" id="IPR027417">
    <property type="entry name" value="P-loop_NTPase"/>
</dbReference>
<dbReference type="PANTHER" id="PTHR47963:SF7">
    <property type="entry name" value="ATP-DEPENDENT RNA HELICASE YFML-RELATED"/>
    <property type="match status" value="1"/>
</dbReference>
<dbReference type="PANTHER" id="PTHR47963">
    <property type="entry name" value="DEAD-BOX ATP-DEPENDENT RNA HELICASE 47, MITOCHONDRIAL"/>
    <property type="match status" value="1"/>
</dbReference>
<dbReference type="Pfam" id="PF00270">
    <property type="entry name" value="DEAD"/>
    <property type="match status" value="1"/>
</dbReference>
<dbReference type="Pfam" id="PF00271">
    <property type="entry name" value="Helicase_C"/>
    <property type="match status" value="1"/>
</dbReference>
<dbReference type="SMART" id="SM00487">
    <property type="entry name" value="DEXDc"/>
    <property type="match status" value="1"/>
</dbReference>
<dbReference type="SMART" id="SM00490">
    <property type="entry name" value="HELICc"/>
    <property type="match status" value="1"/>
</dbReference>
<dbReference type="SUPFAM" id="SSF52540">
    <property type="entry name" value="P-loop containing nucleoside triphosphate hydrolases"/>
    <property type="match status" value="1"/>
</dbReference>
<dbReference type="PROSITE" id="PS51192">
    <property type="entry name" value="HELICASE_ATP_BIND_1"/>
    <property type="match status" value="1"/>
</dbReference>
<dbReference type="PROSITE" id="PS51194">
    <property type="entry name" value="HELICASE_CTER"/>
    <property type="match status" value="1"/>
</dbReference>
<proteinExistence type="evidence at protein level"/>
<name>YFML_BACSU</name>
<reference key="1">
    <citation type="journal article" date="1997" name="Gene">
        <title>Cloning and sequencing of a 35.7 kb in the 70 degree-73 degree region of the Bacillus subtilis genome reveal genes for a new two-component system, three spore germination proteins, an iron uptake system and a general stress response protein.</title>
        <authorList>
            <person name="Yamamoto H."/>
            <person name="Uchiyama S."/>
            <person name="Nugroho F.A."/>
            <person name="Sekiguchi J."/>
        </authorList>
    </citation>
    <scope>NUCLEOTIDE SEQUENCE [GENOMIC DNA]</scope>
    <source>
        <strain>168 / AC327</strain>
    </source>
</reference>
<reference key="2">
    <citation type="journal article" date="1997" name="Nature">
        <title>The complete genome sequence of the Gram-positive bacterium Bacillus subtilis.</title>
        <authorList>
            <person name="Kunst F."/>
            <person name="Ogasawara N."/>
            <person name="Moszer I."/>
            <person name="Albertini A.M."/>
            <person name="Alloni G."/>
            <person name="Azevedo V."/>
            <person name="Bertero M.G."/>
            <person name="Bessieres P."/>
            <person name="Bolotin A."/>
            <person name="Borchert S."/>
            <person name="Borriss R."/>
            <person name="Boursier L."/>
            <person name="Brans A."/>
            <person name="Braun M."/>
            <person name="Brignell S.C."/>
            <person name="Bron S."/>
            <person name="Brouillet S."/>
            <person name="Bruschi C.V."/>
            <person name="Caldwell B."/>
            <person name="Capuano V."/>
            <person name="Carter N.M."/>
            <person name="Choi S.-K."/>
            <person name="Codani J.-J."/>
            <person name="Connerton I.F."/>
            <person name="Cummings N.J."/>
            <person name="Daniel R.A."/>
            <person name="Denizot F."/>
            <person name="Devine K.M."/>
            <person name="Duesterhoeft A."/>
            <person name="Ehrlich S.D."/>
            <person name="Emmerson P.T."/>
            <person name="Entian K.-D."/>
            <person name="Errington J."/>
            <person name="Fabret C."/>
            <person name="Ferrari E."/>
            <person name="Foulger D."/>
            <person name="Fritz C."/>
            <person name="Fujita M."/>
            <person name="Fujita Y."/>
            <person name="Fuma S."/>
            <person name="Galizzi A."/>
            <person name="Galleron N."/>
            <person name="Ghim S.-Y."/>
            <person name="Glaser P."/>
            <person name="Goffeau A."/>
            <person name="Golightly E.J."/>
            <person name="Grandi G."/>
            <person name="Guiseppi G."/>
            <person name="Guy B.J."/>
            <person name="Haga K."/>
            <person name="Haiech J."/>
            <person name="Harwood C.R."/>
            <person name="Henaut A."/>
            <person name="Hilbert H."/>
            <person name="Holsappel S."/>
            <person name="Hosono S."/>
            <person name="Hullo M.-F."/>
            <person name="Itaya M."/>
            <person name="Jones L.-M."/>
            <person name="Joris B."/>
            <person name="Karamata D."/>
            <person name="Kasahara Y."/>
            <person name="Klaerr-Blanchard M."/>
            <person name="Klein C."/>
            <person name="Kobayashi Y."/>
            <person name="Koetter P."/>
            <person name="Koningstein G."/>
            <person name="Krogh S."/>
            <person name="Kumano M."/>
            <person name="Kurita K."/>
            <person name="Lapidus A."/>
            <person name="Lardinois S."/>
            <person name="Lauber J."/>
            <person name="Lazarevic V."/>
            <person name="Lee S.-M."/>
            <person name="Levine A."/>
            <person name="Liu H."/>
            <person name="Masuda S."/>
            <person name="Mauel C."/>
            <person name="Medigue C."/>
            <person name="Medina N."/>
            <person name="Mellado R.P."/>
            <person name="Mizuno M."/>
            <person name="Moestl D."/>
            <person name="Nakai S."/>
            <person name="Noback M."/>
            <person name="Noone D."/>
            <person name="O'Reilly M."/>
            <person name="Ogawa K."/>
            <person name="Ogiwara A."/>
            <person name="Oudega B."/>
            <person name="Park S.-H."/>
            <person name="Parro V."/>
            <person name="Pohl T.M."/>
            <person name="Portetelle D."/>
            <person name="Porwollik S."/>
            <person name="Prescott A.M."/>
            <person name="Presecan E."/>
            <person name="Pujic P."/>
            <person name="Purnelle B."/>
            <person name="Rapoport G."/>
            <person name="Rey M."/>
            <person name="Reynolds S."/>
            <person name="Rieger M."/>
            <person name="Rivolta C."/>
            <person name="Rocha E."/>
            <person name="Roche B."/>
            <person name="Rose M."/>
            <person name="Sadaie Y."/>
            <person name="Sato T."/>
            <person name="Scanlan E."/>
            <person name="Schleich S."/>
            <person name="Schroeter R."/>
            <person name="Scoffone F."/>
            <person name="Sekiguchi J."/>
            <person name="Sekowska A."/>
            <person name="Seror S.J."/>
            <person name="Serror P."/>
            <person name="Shin B.-S."/>
            <person name="Soldo B."/>
            <person name="Sorokin A."/>
            <person name="Tacconi E."/>
            <person name="Takagi T."/>
            <person name="Takahashi H."/>
            <person name="Takemaru K."/>
            <person name="Takeuchi M."/>
            <person name="Tamakoshi A."/>
            <person name="Tanaka T."/>
            <person name="Terpstra P."/>
            <person name="Tognoni A."/>
            <person name="Tosato V."/>
            <person name="Uchiyama S."/>
            <person name="Vandenbol M."/>
            <person name="Vannier F."/>
            <person name="Vassarotti A."/>
            <person name="Viari A."/>
            <person name="Wambutt R."/>
            <person name="Wedler E."/>
            <person name="Wedler H."/>
            <person name="Weitzenegger T."/>
            <person name="Winters P."/>
            <person name="Wipat A."/>
            <person name="Yamamoto H."/>
            <person name="Yamane K."/>
            <person name="Yasumoto K."/>
            <person name="Yata K."/>
            <person name="Yoshida K."/>
            <person name="Yoshikawa H.-F."/>
            <person name="Zumstein E."/>
            <person name="Yoshikawa H."/>
            <person name="Danchin A."/>
        </authorList>
    </citation>
    <scope>NUCLEOTIDE SEQUENCE [LARGE SCALE GENOMIC DNA]</scope>
    <source>
        <strain>168</strain>
    </source>
</reference>
<reference key="3">
    <citation type="journal article" date="2010" name="Mol. Microbiol.">
        <title>The RNA degradosome in Bacillus subtilis: identification of CshA as the major RNA helicase in the multiprotein complex.</title>
        <authorList>
            <person name="Lehnik-Habrink M."/>
            <person name="Pfortner H."/>
            <person name="Rempeters L."/>
            <person name="Pietack N."/>
            <person name="Herzberg C."/>
            <person name="Stulke J."/>
        </authorList>
    </citation>
    <scope>DISCUSSION OF POSSIBLE FUNCTION</scope>
    <source>
        <strain>168</strain>
    </source>
</reference>
<reference key="4">
    <citation type="journal article" date="2013" name="J. Bacteriol.">
        <title>DEAD-box RNA helicases in Bacillus subtilis have multiple functions and act independently from each other.</title>
        <authorList>
            <person name="Lehnik-Habrink M."/>
            <person name="Rempeters L."/>
            <person name="Kovacs A.T."/>
            <person name="Wrede C."/>
            <person name="Baierlein C."/>
            <person name="Krebber H."/>
            <person name="Kuipers O.P."/>
            <person name="Stulke J."/>
        </authorList>
    </citation>
    <scope>FUNCTION</scope>
    <scope>INDUCTION</scope>
    <scope>DISRUPTION PHENOTYPE</scope>
    <source>
        <strain>168</strain>
    </source>
</reference>
<feature type="chain" id="PRO_0000360838" description="Probable ATP-dependent RNA helicase YfmL">
    <location>
        <begin position="1"/>
        <end position="376"/>
    </location>
</feature>
<feature type="domain" description="Helicase ATP-binding" evidence="1">
    <location>
        <begin position="35"/>
        <end position="205"/>
    </location>
</feature>
<feature type="domain" description="Helicase C-terminal" evidence="2">
    <location>
        <begin position="231"/>
        <end position="374"/>
    </location>
</feature>
<feature type="short sequence motif" description="DEAD box">
    <location>
        <begin position="153"/>
        <end position="156"/>
    </location>
</feature>
<feature type="binding site" evidence="1">
    <location>
        <begin position="48"/>
        <end position="55"/>
    </location>
    <ligand>
        <name>ATP</name>
        <dbReference type="ChEBI" id="CHEBI:30616"/>
    </ligand>
</feature>
<accession>O34750</accession>
<accession>Q79ES5</accession>
<keyword id="KW-0067">ATP-binding</keyword>
<keyword id="KW-0347">Helicase</keyword>
<keyword id="KW-0378">Hydrolase</keyword>
<keyword id="KW-0547">Nucleotide-binding</keyword>
<keyword id="KW-1185">Reference proteome</keyword>
<keyword id="KW-0690">Ribosome biogenesis</keyword>
<keyword id="KW-0694">RNA-binding</keyword>
<comment type="function">
    <text evidence="3">A probable DEAD-box RNA helicase that plays a role in ribosomal 50S subunit assembly. May be a non-specific RNA helicase.</text>
</comment>
<comment type="catalytic activity">
    <reaction>
        <text>ATP + H2O = ADP + phosphate + H(+)</text>
        <dbReference type="Rhea" id="RHEA:13065"/>
        <dbReference type="ChEBI" id="CHEBI:15377"/>
        <dbReference type="ChEBI" id="CHEBI:15378"/>
        <dbReference type="ChEBI" id="CHEBI:30616"/>
        <dbReference type="ChEBI" id="CHEBI:43474"/>
        <dbReference type="ChEBI" id="CHEBI:456216"/>
        <dbReference type="EC" id="3.6.4.13"/>
    </reaction>
</comment>
<comment type="induction">
    <text evidence="3">In rich medium highest expression in exponential growth, expression decreases in stationary phase (at protein level).</text>
</comment>
<comment type="disruption phenotype">
    <text evidence="3">No visible effect at 37 degrees Celsius, decreased growth at 16 degrees Celsius. A quadruple disruption of all RNA helicases (cshA, cshB, deaD, yfmL) is not lethal at 37 degrees Celsius, although both 50S and 70S ribosomes are decreased, while growth stops at 16 degrees.</text>
</comment>
<comment type="similarity">
    <text evidence="4">Belongs to the DEAD box helicase family.</text>
</comment>